<sequence length="142" mass="14875">MAKKVQAYVKLQVAAGMANPSPPVGPALGQQGVNIMEFCKAFNAKTDSIEKGLPIPVVITVYADRSFTFVTKTPPAAVLLKKAAGIKSGSGKPNKDKVGKISRAQLQEIAQTKAADMTGADIEAMTRSIEGTARSMGLVVED</sequence>
<feature type="initiator methionine" description="Removed" evidence="1">
    <location>
        <position position="1"/>
    </location>
</feature>
<feature type="chain" id="PRO_0000104355" description="Large ribosomal subunit protein uL11">
    <location>
        <begin position="2"/>
        <end position="142"/>
    </location>
</feature>
<feature type="modified residue" description="N,N,N-trimethylalanine" evidence="1">
    <location>
        <position position="2"/>
    </location>
</feature>
<feature type="modified residue" description="N6,N6,N6-trimethyllysine" evidence="1">
    <location>
        <position position="4"/>
    </location>
</feature>
<feature type="modified residue" description="N6,N6,N6-trimethyllysine" evidence="1">
    <location>
        <position position="40"/>
    </location>
</feature>
<name>RL11_SALTY</name>
<keyword id="KW-0488">Methylation</keyword>
<keyword id="KW-1185">Reference proteome</keyword>
<keyword id="KW-0687">Ribonucleoprotein</keyword>
<keyword id="KW-0689">Ribosomal protein</keyword>
<keyword id="KW-0694">RNA-binding</keyword>
<keyword id="KW-0699">rRNA-binding</keyword>
<protein>
    <recommendedName>
        <fullName evidence="2">Large ribosomal subunit protein uL11</fullName>
    </recommendedName>
    <alternativeName>
        <fullName evidence="3">50S ribosomal protein L11</fullName>
    </alternativeName>
</protein>
<organism>
    <name type="scientific">Salmonella typhimurium (strain LT2 / SGSC1412 / ATCC 700720)</name>
    <dbReference type="NCBI Taxonomy" id="99287"/>
    <lineage>
        <taxon>Bacteria</taxon>
        <taxon>Pseudomonadati</taxon>
        <taxon>Pseudomonadota</taxon>
        <taxon>Gammaproteobacteria</taxon>
        <taxon>Enterobacterales</taxon>
        <taxon>Enterobacteriaceae</taxon>
        <taxon>Salmonella</taxon>
    </lineage>
</organism>
<reference key="1">
    <citation type="journal article" date="2001" name="Nature">
        <title>Complete genome sequence of Salmonella enterica serovar Typhimurium LT2.</title>
        <authorList>
            <person name="McClelland M."/>
            <person name="Sanderson K.E."/>
            <person name="Spieth J."/>
            <person name="Clifton S.W."/>
            <person name="Latreille P."/>
            <person name="Courtney L."/>
            <person name="Porwollik S."/>
            <person name="Ali J."/>
            <person name="Dante M."/>
            <person name="Du F."/>
            <person name="Hou S."/>
            <person name="Layman D."/>
            <person name="Leonard S."/>
            <person name="Nguyen C."/>
            <person name="Scott K."/>
            <person name="Holmes A."/>
            <person name="Grewal N."/>
            <person name="Mulvaney E."/>
            <person name="Ryan E."/>
            <person name="Sun H."/>
            <person name="Florea L."/>
            <person name="Miller W."/>
            <person name="Stoneking T."/>
            <person name="Nhan M."/>
            <person name="Waterston R."/>
            <person name="Wilson R.K."/>
        </authorList>
    </citation>
    <scope>NUCLEOTIDE SEQUENCE [LARGE SCALE GENOMIC DNA]</scope>
    <source>
        <strain>LT2 / SGSC1412 / ATCC 700720</strain>
    </source>
</reference>
<comment type="function">
    <text evidence="2">Forms part of the ribosomal stalk which helps the ribosome interact with GTP-bound translation factors.</text>
</comment>
<comment type="subunit">
    <text evidence="2">Part of the ribosomal stalk of the 50S ribosomal subunit. Interacts with L10 and the large rRNA to form the base of the stalk. L10 forms an elongated spine to which L12 dimers bind in a sequential fashion forming a multimeric L10(L12)X complex.</text>
</comment>
<comment type="PTM">
    <text evidence="2">One or more lysine residues are methylated.</text>
</comment>
<comment type="similarity">
    <text evidence="2">Belongs to the universal ribosomal protein uL11 family.</text>
</comment>
<accession>P0A7K0</accession>
<accession>P02409</accession>
<accession>P76778</accession>
<gene>
    <name evidence="2" type="primary">rplK</name>
    <name type="ordered locus">STM4149</name>
    <name type="ORF">STMF1.8</name>
</gene>
<dbReference type="EMBL" id="AF170176">
    <property type="protein sequence ID" value="AAF33514.1"/>
    <property type="molecule type" value="Genomic_DNA"/>
</dbReference>
<dbReference type="EMBL" id="AE006468">
    <property type="protein sequence ID" value="AAL22977.1"/>
    <property type="molecule type" value="Genomic_DNA"/>
</dbReference>
<dbReference type="RefSeq" id="NP_463018.1">
    <property type="nucleotide sequence ID" value="NC_003197.2"/>
</dbReference>
<dbReference type="RefSeq" id="WP_001085926.1">
    <property type="nucleotide sequence ID" value="NC_003197.2"/>
</dbReference>
<dbReference type="SMR" id="P0A7K0"/>
<dbReference type="STRING" id="99287.STM4149"/>
<dbReference type="PaxDb" id="99287-STM4149"/>
<dbReference type="GeneID" id="1255675"/>
<dbReference type="GeneID" id="93777911"/>
<dbReference type="KEGG" id="stm:STM4149"/>
<dbReference type="PATRIC" id="fig|99287.12.peg.4361"/>
<dbReference type="HOGENOM" id="CLU_074237_2_0_6"/>
<dbReference type="OMA" id="CKQFNAK"/>
<dbReference type="PhylomeDB" id="P0A7K0"/>
<dbReference type="BioCyc" id="SENT99287:STM4149-MONOMER"/>
<dbReference type="Proteomes" id="UP000001014">
    <property type="component" value="Chromosome"/>
</dbReference>
<dbReference type="GO" id="GO:0022625">
    <property type="term" value="C:cytosolic large ribosomal subunit"/>
    <property type="evidence" value="ECO:0000318"/>
    <property type="project" value="GO_Central"/>
</dbReference>
<dbReference type="GO" id="GO:0070180">
    <property type="term" value="F:large ribosomal subunit rRNA binding"/>
    <property type="evidence" value="ECO:0000318"/>
    <property type="project" value="GO_Central"/>
</dbReference>
<dbReference type="GO" id="GO:0003735">
    <property type="term" value="F:structural constituent of ribosome"/>
    <property type="evidence" value="ECO:0000318"/>
    <property type="project" value="GO_Central"/>
</dbReference>
<dbReference type="GO" id="GO:0006412">
    <property type="term" value="P:translation"/>
    <property type="evidence" value="ECO:0000318"/>
    <property type="project" value="GO_Central"/>
</dbReference>
<dbReference type="CDD" id="cd00349">
    <property type="entry name" value="Ribosomal_L11"/>
    <property type="match status" value="1"/>
</dbReference>
<dbReference type="FunFam" id="1.10.10.250:FF:000001">
    <property type="entry name" value="50S ribosomal protein L11"/>
    <property type="match status" value="1"/>
</dbReference>
<dbReference type="FunFam" id="3.30.1550.10:FF:000001">
    <property type="entry name" value="50S ribosomal protein L11"/>
    <property type="match status" value="1"/>
</dbReference>
<dbReference type="Gene3D" id="1.10.10.250">
    <property type="entry name" value="Ribosomal protein L11, C-terminal domain"/>
    <property type="match status" value="1"/>
</dbReference>
<dbReference type="Gene3D" id="3.30.1550.10">
    <property type="entry name" value="Ribosomal protein L11/L12, N-terminal domain"/>
    <property type="match status" value="1"/>
</dbReference>
<dbReference type="HAMAP" id="MF_00736">
    <property type="entry name" value="Ribosomal_uL11"/>
    <property type="match status" value="1"/>
</dbReference>
<dbReference type="InterPro" id="IPR000911">
    <property type="entry name" value="Ribosomal_uL11"/>
</dbReference>
<dbReference type="InterPro" id="IPR006519">
    <property type="entry name" value="Ribosomal_uL11_bac-typ"/>
</dbReference>
<dbReference type="InterPro" id="IPR020783">
    <property type="entry name" value="Ribosomal_uL11_C"/>
</dbReference>
<dbReference type="InterPro" id="IPR036769">
    <property type="entry name" value="Ribosomal_uL11_C_sf"/>
</dbReference>
<dbReference type="InterPro" id="IPR020785">
    <property type="entry name" value="Ribosomal_uL11_CS"/>
</dbReference>
<dbReference type="InterPro" id="IPR020784">
    <property type="entry name" value="Ribosomal_uL11_N"/>
</dbReference>
<dbReference type="InterPro" id="IPR036796">
    <property type="entry name" value="Ribosomal_uL11_N_sf"/>
</dbReference>
<dbReference type="NCBIfam" id="TIGR01632">
    <property type="entry name" value="L11_bact"/>
    <property type="match status" value="1"/>
</dbReference>
<dbReference type="PANTHER" id="PTHR11661">
    <property type="entry name" value="60S RIBOSOMAL PROTEIN L12"/>
    <property type="match status" value="1"/>
</dbReference>
<dbReference type="PANTHER" id="PTHR11661:SF1">
    <property type="entry name" value="LARGE RIBOSOMAL SUBUNIT PROTEIN UL11M"/>
    <property type="match status" value="1"/>
</dbReference>
<dbReference type="Pfam" id="PF00298">
    <property type="entry name" value="Ribosomal_L11"/>
    <property type="match status" value="1"/>
</dbReference>
<dbReference type="Pfam" id="PF03946">
    <property type="entry name" value="Ribosomal_L11_N"/>
    <property type="match status" value="1"/>
</dbReference>
<dbReference type="SMART" id="SM00649">
    <property type="entry name" value="RL11"/>
    <property type="match status" value="1"/>
</dbReference>
<dbReference type="SUPFAM" id="SSF54747">
    <property type="entry name" value="Ribosomal L11/L12e N-terminal domain"/>
    <property type="match status" value="1"/>
</dbReference>
<dbReference type="SUPFAM" id="SSF46906">
    <property type="entry name" value="Ribosomal protein L11, C-terminal domain"/>
    <property type="match status" value="1"/>
</dbReference>
<dbReference type="PROSITE" id="PS00359">
    <property type="entry name" value="RIBOSOMAL_L11"/>
    <property type="match status" value="1"/>
</dbReference>
<proteinExistence type="inferred from homology"/>
<evidence type="ECO:0000250" key="1"/>
<evidence type="ECO:0000255" key="2">
    <source>
        <dbReference type="HAMAP-Rule" id="MF_00736"/>
    </source>
</evidence>
<evidence type="ECO:0000305" key="3"/>